<keyword id="KW-0002">3D-structure</keyword>
<keyword id="KW-0227">DNA damage</keyword>
<keyword id="KW-0234">DNA repair</keyword>
<keyword id="KW-1048">Host nucleus</keyword>
<keyword id="KW-0378">Hydrolase</keyword>
<keyword id="KW-1185">Reference proteome</keyword>
<proteinExistence type="evidence at protein level"/>
<organism>
    <name type="scientific">Human herpesvirus 1 (strain 17)</name>
    <name type="common">HHV-1</name>
    <name type="synonym">Human herpes simplex virus 1</name>
    <dbReference type="NCBI Taxonomy" id="10299"/>
    <lineage>
        <taxon>Viruses</taxon>
        <taxon>Duplodnaviria</taxon>
        <taxon>Heunggongvirae</taxon>
        <taxon>Peploviricota</taxon>
        <taxon>Herviviricetes</taxon>
        <taxon>Herpesvirales</taxon>
        <taxon>Orthoherpesviridae</taxon>
        <taxon>Alphaherpesvirinae</taxon>
        <taxon>Simplexvirus</taxon>
        <taxon>Simplexvirus humanalpha1</taxon>
        <taxon>Human herpesvirus 1</taxon>
    </lineage>
</organism>
<evidence type="ECO:0000255" key="1">
    <source>
        <dbReference type="HAMAP-Rule" id="MF_04046"/>
    </source>
</evidence>
<evidence type="ECO:0000256" key="2">
    <source>
        <dbReference type="SAM" id="MobiDB-lite"/>
    </source>
</evidence>
<evidence type="ECO:0000269" key="3">
    <source>
    </source>
</evidence>
<evidence type="ECO:0000269" key="4">
    <source>
    </source>
</evidence>
<evidence type="ECO:0000269" key="5">
    <source>
    </source>
</evidence>
<evidence type="ECO:0007829" key="6">
    <source>
        <dbReference type="PDB" id="1UDG"/>
    </source>
</evidence>
<evidence type="ECO:0007829" key="7">
    <source>
        <dbReference type="PDB" id="1UDH"/>
    </source>
</evidence>
<dbReference type="EC" id="3.2.2.27" evidence="1"/>
<dbReference type="EMBL" id="X14112">
    <property type="protein sequence ID" value="CAA32338.1"/>
    <property type="molecule type" value="Genomic_DNA"/>
</dbReference>
<dbReference type="EMBL" id="DQ889502">
    <property type="protein sequence ID" value="ABI63464.1"/>
    <property type="molecule type" value="Genomic_DNA"/>
</dbReference>
<dbReference type="EMBL" id="FJ593289">
    <property type="protein sequence ID" value="ACM62224.1"/>
    <property type="molecule type" value="Genomic_DNA"/>
</dbReference>
<dbReference type="PIR" id="B28133">
    <property type="entry name" value="DGBEX2"/>
</dbReference>
<dbReference type="RefSeq" id="YP_009137076.1">
    <property type="nucleotide sequence ID" value="NC_001806.2"/>
</dbReference>
<dbReference type="PDB" id="1LAU">
    <property type="method" value="X-ray"/>
    <property type="resolution" value="1.80 A"/>
    <property type="chains" value="E=91-334"/>
</dbReference>
<dbReference type="PDB" id="1UDG">
    <property type="method" value="X-ray"/>
    <property type="resolution" value="1.75 A"/>
    <property type="chains" value="A=91-334"/>
</dbReference>
<dbReference type="PDB" id="1UDH">
    <property type="method" value="X-ray"/>
    <property type="resolution" value="1.75 A"/>
    <property type="chains" value="A=91-334"/>
</dbReference>
<dbReference type="PDB" id="1UDI">
    <property type="method" value="X-ray"/>
    <property type="resolution" value="2.70 A"/>
    <property type="chains" value="E=91-334"/>
</dbReference>
<dbReference type="PDB" id="2C53">
    <property type="method" value="X-ray"/>
    <property type="resolution" value="1.80 A"/>
    <property type="chains" value="A=91-334"/>
</dbReference>
<dbReference type="PDB" id="2C56">
    <property type="method" value="X-ray"/>
    <property type="resolution" value="2.10 A"/>
    <property type="chains" value="A=91-334"/>
</dbReference>
<dbReference type="PDB" id="4L5N">
    <property type="method" value="X-ray"/>
    <property type="resolution" value="2.16 A"/>
    <property type="chains" value="A/B=96-334"/>
</dbReference>
<dbReference type="PDB" id="5AYS">
    <property type="method" value="X-ray"/>
    <property type="resolution" value="2.09 A"/>
    <property type="chains" value="A/B=91-334"/>
</dbReference>
<dbReference type="PDBsum" id="1LAU"/>
<dbReference type="PDBsum" id="1UDG"/>
<dbReference type="PDBsum" id="1UDH"/>
<dbReference type="PDBsum" id="1UDI"/>
<dbReference type="PDBsum" id="2C53"/>
<dbReference type="PDBsum" id="2C56"/>
<dbReference type="PDBsum" id="4L5N"/>
<dbReference type="PDBsum" id="5AYS"/>
<dbReference type="SMR" id="P10186"/>
<dbReference type="MINT" id="P10186"/>
<dbReference type="DrugBank" id="DB03419">
    <property type="generic name" value="Uracil"/>
</dbReference>
<dbReference type="DNASU" id="2703370"/>
<dbReference type="GeneID" id="2703370"/>
<dbReference type="KEGG" id="vg:2703370"/>
<dbReference type="BRENDA" id="3.2.2.27">
    <property type="organism ID" value="2647"/>
</dbReference>
<dbReference type="SABIO-RK" id="P10186"/>
<dbReference type="EvolutionaryTrace" id="P10186"/>
<dbReference type="Proteomes" id="UP000009294">
    <property type="component" value="Segment"/>
</dbReference>
<dbReference type="Proteomes" id="UP000180652">
    <property type="component" value="Segment"/>
</dbReference>
<dbReference type="GO" id="GO:0042025">
    <property type="term" value="C:host cell nucleus"/>
    <property type="evidence" value="ECO:0007669"/>
    <property type="project" value="UniProtKB-SubCell"/>
</dbReference>
<dbReference type="GO" id="GO:0004844">
    <property type="term" value="F:uracil DNA N-glycosylase activity"/>
    <property type="evidence" value="ECO:0007669"/>
    <property type="project" value="UniProtKB-EC"/>
</dbReference>
<dbReference type="GO" id="GO:0097510">
    <property type="term" value="P:base-excision repair, AP site formation via deaminated base removal"/>
    <property type="evidence" value="ECO:0007669"/>
    <property type="project" value="TreeGrafter"/>
</dbReference>
<dbReference type="CDD" id="cd10027">
    <property type="entry name" value="UDG-F1-like"/>
    <property type="match status" value="1"/>
</dbReference>
<dbReference type="Gene3D" id="3.40.470.10">
    <property type="entry name" value="Uracil-DNA glycosylase-like domain"/>
    <property type="match status" value="1"/>
</dbReference>
<dbReference type="HAMAP" id="MF_00148">
    <property type="entry name" value="UDG"/>
    <property type="match status" value="1"/>
</dbReference>
<dbReference type="InterPro" id="IPR002043">
    <property type="entry name" value="UDG_fam1"/>
</dbReference>
<dbReference type="InterPro" id="IPR018085">
    <property type="entry name" value="Ura-DNA_Glyclase_AS"/>
</dbReference>
<dbReference type="InterPro" id="IPR005122">
    <property type="entry name" value="Uracil-DNA_glycosylase-like"/>
</dbReference>
<dbReference type="InterPro" id="IPR036895">
    <property type="entry name" value="Uracil-DNA_glycosylase-like_sf"/>
</dbReference>
<dbReference type="NCBIfam" id="NF003589">
    <property type="entry name" value="PRK05254.1-2"/>
    <property type="match status" value="1"/>
</dbReference>
<dbReference type="NCBIfam" id="NF003592">
    <property type="entry name" value="PRK05254.1-5"/>
    <property type="match status" value="1"/>
</dbReference>
<dbReference type="NCBIfam" id="TIGR00628">
    <property type="entry name" value="ung"/>
    <property type="match status" value="1"/>
</dbReference>
<dbReference type="PANTHER" id="PTHR11264">
    <property type="entry name" value="URACIL-DNA GLYCOSYLASE"/>
    <property type="match status" value="1"/>
</dbReference>
<dbReference type="PANTHER" id="PTHR11264:SF0">
    <property type="entry name" value="URACIL-DNA GLYCOSYLASE"/>
    <property type="match status" value="1"/>
</dbReference>
<dbReference type="Pfam" id="PF03167">
    <property type="entry name" value="UDG"/>
    <property type="match status" value="1"/>
</dbReference>
<dbReference type="SMART" id="SM00986">
    <property type="entry name" value="UDG"/>
    <property type="match status" value="1"/>
</dbReference>
<dbReference type="SMART" id="SM00987">
    <property type="entry name" value="UreE_C"/>
    <property type="match status" value="1"/>
</dbReference>
<dbReference type="SUPFAM" id="SSF52141">
    <property type="entry name" value="Uracil-DNA glycosylase-like"/>
    <property type="match status" value="1"/>
</dbReference>
<dbReference type="PROSITE" id="PS00130">
    <property type="entry name" value="U_DNA_GLYCOSYLASE"/>
    <property type="match status" value="1"/>
</dbReference>
<sequence>MKRACSRSPSPRRRPSSPRRTPPRDGTPPQKADADDPTPGASNDASTETRPGSGGEPAACRSSGPAALLAALEAGPAGVTFSSSAPPDPPMDLTNGGVSPAATSAPLDWTTFRRVFLIDDAWRPLMEPELANPLTAHLLAEYNRRCQTEEVLPPREDVFSWTRYCTPDEVRVVIIGQDPYHHPGQAHGLAFSVRANVPPPPSLRNVLAAVKNCYPEARMSGHGCLEKWARDGVLLLNTTLTVKRGAAASHSRIGWDRFVGGVIRRLAARRPGLVFMLWGTHAQNAIRPDPRVHCVLKFSHPSPLSKVPFGTCQHFLVANRYLETRSISPIDWSV</sequence>
<reference key="1">
    <citation type="journal article" date="1988" name="J. Gen. Virol.">
        <title>The complete DNA sequence of the long unique region in the genome of herpes simplex virus type 1.</title>
        <authorList>
            <person name="McGeoch D.J."/>
            <person name="Dalrymple M.A."/>
            <person name="Davison A.J."/>
            <person name="Dolan A."/>
            <person name="Frame M.C."/>
            <person name="McNab D."/>
            <person name="Perry L.J."/>
            <person name="Scott J.E."/>
            <person name="Taylor P."/>
        </authorList>
    </citation>
    <scope>NUCLEOTIDE SEQUENCE [LARGE SCALE GENOMIC DNA]</scope>
</reference>
<reference key="2">
    <citation type="journal article" date="2007" name="Microbes Infect.">
        <title>Determination and analysis of the DNA sequence of highly attenuated herpes simplex virus type 1 mutant HF10, a potential oncolytic virus.</title>
        <authorList>
            <person name="Ushijima Y."/>
            <person name="Luo C."/>
            <person name="Goshima F."/>
            <person name="Yamauchi Y."/>
            <person name="Kimura H."/>
            <person name="Nishiyama Y."/>
        </authorList>
    </citation>
    <scope>NUCLEOTIDE SEQUENCE [LARGE SCALE GENOMIC DNA]</scope>
    <source>
        <strain>Nonneuroinvasive mutant HF10</strain>
    </source>
</reference>
<reference key="3">
    <citation type="submission" date="2008-12" db="EMBL/GenBank/DDBJ databases">
        <title>Herpes simplex virus type 1 bacterial artificial chromosome.</title>
        <authorList>
            <person name="Cunningham C."/>
            <person name="Davison A.J."/>
        </authorList>
    </citation>
    <scope>NUCLEOTIDE SEQUENCE [LARGE SCALE GENOMIC DNA]</scope>
    <source>
        <strain>17 syn+</strain>
    </source>
</reference>
<reference key="4">
    <citation type="journal article" date="1993" name="Biochem. J.">
        <title>Herpes simplex virus type 1 uracil-DNA glycosylase: isolation and selective inhibition by novel uracil derivatives.</title>
        <authorList>
            <person name="Focher F."/>
            <person name="Verri A."/>
            <person name="Spadari S."/>
            <person name="Manservigi R."/>
            <person name="Gambino J."/>
            <person name="Wright G.E."/>
        </authorList>
    </citation>
    <scope>FUNCTION</scope>
    <scope>SUBCELLULAR LOCATION</scope>
    <scope>CATALYTIC ACTIVITY</scope>
</reference>
<reference key="5">
    <citation type="journal article" date="1995" name="Nature">
        <title>The structural basis of specific base-excision repair by uracil-DNA glycosylase.</title>
        <authorList>
            <person name="Savva R."/>
            <person name="McAuley-Hecht K."/>
            <person name="Brown T."/>
            <person name="Pearl L."/>
        </authorList>
    </citation>
    <scope>X-RAY CRYSTALLOGRAPHY (1.75 ANGSTROMS) OF 91-334</scope>
</reference>
<reference key="6">
    <citation type="journal article" date="1995" name="Nat. Struct. Biol.">
        <title>Nucleotide mimicry in the crystal structure of the uracil-DNA glycosylase-uracil glycosylase inhibitor protein complex.</title>
        <authorList>
            <person name="Savva R."/>
            <person name="Pearl L.H."/>
        </authorList>
    </citation>
    <scope>X-RAY CRYSTALLOGRAPHY (2.7 ANGSTROMS) OF 91-334</scope>
    <scope>FUNCTION</scope>
</reference>
<reference key="7">
    <citation type="journal article" date="2006" name="J. Biol. Chem.">
        <title>A comparative study of uracil-DNA glycosylases from human and herpes simplex virus type 1.</title>
        <authorList>
            <person name="Krusong K."/>
            <person name="Carpenter E.P."/>
            <person name="Bellamy S.R."/>
            <person name="Savva R."/>
            <person name="Baldwin G.S."/>
        </authorList>
    </citation>
    <scope>X-RAY CRYSTALLOGRAPHY (1.8 ANGSTROMS) OF 91-334</scope>
    <scope>FUNCTION</scope>
</reference>
<feature type="chain" id="PRO_0000176185" description="Uracil-DNA glycosylase">
    <location>
        <begin position="1"/>
        <end position="334"/>
    </location>
</feature>
<feature type="region of interest" description="Disordered" evidence="2">
    <location>
        <begin position="1"/>
        <end position="63"/>
    </location>
</feature>
<feature type="region of interest" description="Disordered" evidence="2">
    <location>
        <begin position="79"/>
        <end position="104"/>
    </location>
</feature>
<feature type="compositionally biased region" description="Basic residues" evidence="2">
    <location>
        <begin position="1"/>
        <end position="17"/>
    </location>
</feature>
<feature type="compositionally biased region" description="Polar residues" evidence="2">
    <location>
        <begin position="40"/>
        <end position="50"/>
    </location>
</feature>
<feature type="active site" description="Proton acceptor" evidence="1">
    <location>
        <position position="178"/>
    </location>
</feature>
<feature type="sequence variant" description="In strain: Nonneuroinvasive mutant HF10.">
    <original>T</original>
    <variation>I</variation>
    <location>
        <position position="38"/>
    </location>
</feature>
<feature type="sequence variant" description="In strain: Nonneuroinvasive mutant HF10.">
    <original>T</original>
    <variation>N</variation>
    <location>
        <position position="49"/>
    </location>
</feature>
<feature type="sequence variant" description="In strain: Nonneuroinvasive mutant HF10.">
    <original>S</original>
    <variation>L</variation>
    <location>
        <position position="53"/>
    </location>
</feature>
<feature type="sequence variant" description="In strain: Nonneuroinvasive mutant HF10 and 17 syn+.">
    <original>ALLAALEAG</original>
    <variation>GAPRRPRGC</variation>
    <location>
        <begin position="67"/>
        <end position="75"/>
    </location>
</feature>
<feature type="sequence variant" description="In strain: Nonneuroinvasive mutant HF10.">
    <original>M</original>
    <variation>L</variation>
    <location>
        <position position="126"/>
    </location>
</feature>
<feature type="sequence variant" description="In strain: Nonneuroinvasive mutant HF10.">
    <original>T</original>
    <variation>A</variation>
    <location>
        <position position="280"/>
    </location>
</feature>
<feature type="helix" evidence="6">
    <location>
        <begin position="108"/>
        <end position="116"/>
    </location>
</feature>
<feature type="helix" evidence="6">
    <location>
        <begin position="120"/>
        <end position="122"/>
    </location>
</feature>
<feature type="helix" evidence="6">
    <location>
        <begin position="123"/>
        <end position="130"/>
    </location>
</feature>
<feature type="helix" evidence="6">
    <location>
        <begin position="133"/>
        <end position="148"/>
    </location>
</feature>
<feature type="strand" evidence="6">
    <location>
        <begin position="151"/>
        <end position="153"/>
    </location>
</feature>
<feature type="turn" evidence="6">
    <location>
        <begin position="155"/>
        <end position="160"/>
    </location>
</feature>
<feature type="helix" evidence="6">
    <location>
        <begin position="161"/>
        <end position="164"/>
    </location>
</feature>
<feature type="helix" evidence="6">
    <location>
        <begin position="167"/>
        <end position="169"/>
    </location>
</feature>
<feature type="strand" evidence="6">
    <location>
        <begin position="172"/>
        <end position="176"/>
    </location>
</feature>
<feature type="turn" evidence="6">
    <location>
        <begin position="183"/>
        <end position="185"/>
    </location>
</feature>
<feature type="strand" evidence="6">
    <location>
        <begin position="187"/>
        <end position="191"/>
    </location>
</feature>
<feature type="helix" evidence="6">
    <location>
        <begin position="201"/>
        <end position="213"/>
    </location>
</feature>
<feature type="helix" evidence="6">
    <location>
        <begin position="226"/>
        <end position="230"/>
    </location>
</feature>
<feature type="strand" evidence="6">
    <location>
        <begin position="233"/>
        <end position="239"/>
    </location>
</feature>
<feature type="turn" evidence="6">
    <location>
        <begin position="247"/>
        <end position="252"/>
    </location>
</feature>
<feature type="helix" evidence="6">
    <location>
        <begin position="255"/>
        <end position="269"/>
    </location>
</feature>
<feature type="strand" evidence="7">
    <location>
        <begin position="270"/>
        <end position="272"/>
    </location>
</feature>
<feature type="strand" evidence="6">
    <location>
        <begin position="274"/>
        <end position="279"/>
    </location>
</feature>
<feature type="helix" evidence="6">
    <location>
        <begin position="280"/>
        <end position="285"/>
    </location>
</feature>
<feature type="turn" evidence="6">
    <location>
        <begin position="290"/>
        <end position="292"/>
    </location>
</feature>
<feature type="strand" evidence="6">
    <location>
        <begin position="293"/>
        <end position="298"/>
    </location>
</feature>
<feature type="strand" evidence="6">
    <location>
        <begin position="305"/>
        <end position="307"/>
    </location>
</feature>
<feature type="helix" evidence="6">
    <location>
        <begin position="309"/>
        <end position="311"/>
    </location>
</feature>
<feature type="helix" evidence="6">
    <location>
        <begin position="314"/>
        <end position="323"/>
    </location>
</feature>
<feature type="turn" evidence="6">
    <location>
        <begin position="324"/>
        <end position="326"/>
    </location>
</feature>
<comment type="function">
    <text evidence="1 3 4 5">Excises uracil residues from the DNA which can arise as a result of misincorporation of dUMP residues by DNA polymerase or deamination of cytosines. Therefore may reduce deleterious uracil incorporation into the viral genome, particularly in terminally differentiated cells which lack DNA repair enzymes.</text>
</comment>
<comment type="catalytic activity">
    <reaction evidence="1 5">
        <text>Hydrolyzes single-stranded DNA or mismatched double-stranded DNA and polynucleotides, releasing free uracil.</text>
        <dbReference type="EC" id="3.2.2.27"/>
    </reaction>
</comment>
<comment type="subcellular location">
    <subcellularLocation>
        <location evidence="1 5">Host nucleus</location>
    </subcellularLocation>
</comment>
<comment type="similarity">
    <text evidence="1">Belongs to the uracil-DNA glycosylase (UDG) superfamily. UNG family.</text>
</comment>
<organismHost>
    <name type="scientific">Homo sapiens</name>
    <name type="common">Human</name>
    <dbReference type="NCBI Taxonomy" id="9606"/>
</organismHost>
<gene>
    <name type="ORF">UL2</name>
</gene>
<accession>P10186</accession>
<accession>B9VQC9</accession>
<accession>Q09ID1</accession>
<protein>
    <recommendedName>
        <fullName evidence="1">Uracil-DNA glycosylase</fullName>
        <shortName evidence="1">UDG</shortName>
        <ecNumber evidence="1">3.2.2.27</ecNumber>
    </recommendedName>
    <alternativeName>
        <fullName evidence="1">UNG</fullName>
    </alternativeName>
</protein>
<name>UNG_HHV11</name>